<reference key="1">
    <citation type="journal article" date="2009" name="J. Bacteriol.">
        <title>The complete genome sequence of Helicobacter pylori strain G27.</title>
        <authorList>
            <person name="Baltrus D.A."/>
            <person name="Amieva M.R."/>
            <person name="Covacci A."/>
            <person name="Lowe T.M."/>
            <person name="Merrell D.S."/>
            <person name="Ottemann K.M."/>
            <person name="Stein M."/>
            <person name="Salama N.R."/>
            <person name="Guillemin K."/>
        </authorList>
    </citation>
    <scope>NUCLEOTIDE SEQUENCE [LARGE SCALE GENOMIC DNA]</scope>
    <source>
        <strain>G27</strain>
    </source>
</reference>
<gene>
    <name evidence="1" type="primary">atpA</name>
    <name type="ordered locus">HPG27_1079</name>
</gene>
<protein>
    <recommendedName>
        <fullName evidence="1">ATP synthase subunit alpha</fullName>
        <ecNumber evidence="1">7.1.2.2</ecNumber>
    </recommendedName>
    <alternativeName>
        <fullName evidence="1">ATP synthase F1 sector subunit alpha</fullName>
    </alternativeName>
    <alternativeName>
        <fullName evidence="1">F-ATPase subunit alpha</fullName>
    </alternativeName>
</protein>
<accession>B5Z8D2</accession>
<feature type="chain" id="PRO_1000143391" description="ATP synthase subunit alpha">
    <location>
        <begin position="1"/>
        <end position="503"/>
    </location>
</feature>
<feature type="binding site" evidence="1">
    <location>
        <begin position="170"/>
        <end position="177"/>
    </location>
    <ligand>
        <name>ATP</name>
        <dbReference type="ChEBI" id="CHEBI:30616"/>
    </ligand>
</feature>
<feature type="site" description="Required for activity" evidence="1">
    <location>
        <position position="363"/>
    </location>
</feature>
<sequence>MSQLKLEEISSVIEEKIKNFELDCDMAEVGKVVSYADGVAKVYGLNGVMSYEVLEFETGDKGVAANLEEDSVGVIVFGFGNNIKEGTSVKRTKSLMKVPVGDAVVGRVLNALGEPIDGKGEIETNEFSLIEQKAPGIMDRKSVHEPLQTGIKAIDALVPIGRGQRELIIGDKQTGKTTVAIDAIINQKGQNVICIYVAIGQKESTVAQVVRKLEEYGAMEYSVVINASASDSAAMQYLAPYSGVAMGEYFRDHARHALIVYDDLSKHAVAYREISLILRRPPGREAFPGDVFYIHSRLLERAAKLCDEKGAGSLTALPIVETQAGDVSAYIPTNIISITDGQIFLETDLFYSGIRPAINVGLSVSRVGGAAQIKATKQVSGTLRLDLAQYRELQAFTQFASDLDEASKKQLERGQRMVEVLKQAPYSPLPIEKQVVIIYAGAKGFLDSVSVKKVVDFEEQLHPFLEAKYPQVLEEIHTKKALDKDLEAMLRKVLEEFKLTYSE</sequence>
<dbReference type="EC" id="7.1.2.2" evidence="1"/>
<dbReference type="EMBL" id="CP001173">
    <property type="protein sequence ID" value="ACI27831.1"/>
    <property type="molecule type" value="Genomic_DNA"/>
</dbReference>
<dbReference type="RefSeq" id="WP_000080518.1">
    <property type="nucleotide sequence ID" value="NC_011333.1"/>
</dbReference>
<dbReference type="SMR" id="B5Z8D2"/>
<dbReference type="KEGG" id="hpg:HPG27_1079"/>
<dbReference type="HOGENOM" id="CLU_010091_2_1_7"/>
<dbReference type="Proteomes" id="UP000001735">
    <property type="component" value="Chromosome"/>
</dbReference>
<dbReference type="GO" id="GO:0005886">
    <property type="term" value="C:plasma membrane"/>
    <property type="evidence" value="ECO:0007669"/>
    <property type="project" value="UniProtKB-SubCell"/>
</dbReference>
<dbReference type="GO" id="GO:0045259">
    <property type="term" value="C:proton-transporting ATP synthase complex"/>
    <property type="evidence" value="ECO:0007669"/>
    <property type="project" value="UniProtKB-KW"/>
</dbReference>
<dbReference type="GO" id="GO:0043531">
    <property type="term" value="F:ADP binding"/>
    <property type="evidence" value="ECO:0007669"/>
    <property type="project" value="TreeGrafter"/>
</dbReference>
<dbReference type="GO" id="GO:0005524">
    <property type="term" value="F:ATP binding"/>
    <property type="evidence" value="ECO:0007669"/>
    <property type="project" value="UniProtKB-UniRule"/>
</dbReference>
<dbReference type="GO" id="GO:0046933">
    <property type="term" value="F:proton-transporting ATP synthase activity, rotational mechanism"/>
    <property type="evidence" value="ECO:0007669"/>
    <property type="project" value="UniProtKB-UniRule"/>
</dbReference>
<dbReference type="CDD" id="cd18113">
    <property type="entry name" value="ATP-synt_F1_alpha_C"/>
    <property type="match status" value="1"/>
</dbReference>
<dbReference type="CDD" id="cd18116">
    <property type="entry name" value="ATP-synt_F1_alpha_N"/>
    <property type="match status" value="1"/>
</dbReference>
<dbReference type="CDD" id="cd01132">
    <property type="entry name" value="F1-ATPase_alpha_CD"/>
    <property type="match status" value="1"/>
</dbReference>
<dbReference type="FunFam" id="1.20.150.20:FF:000001">
    <property type="entry name" value="ATP synthase subunit alpha"/>
    <property type="match status" value="1"/>
</dbReference>
<dbReference type="FunFam" id="3.40.50.300:FF:000002">
    <property type="entry name" value="ATP synthase subunit alpha"/>
    <property type="match status" value="1"/>
</dbReference>
<dbReference type="Gene3D" id="2.40.30.20">
    <property type="match status" value="1"/>
</dbReference>
<dbReference type="Gene3D" id="1.20.150.20">
    <property type="entry name" value="ATP synthase alpha/beta chain, C-terminal domain"/>
    <property type="match status" value="1"/>
</dbReference>
<dbReference type="Gene3D" id="3.40.50.300">
    <property type="entry name" value="P-loop containing nucleotide triphosphate hydrolases"/>
    <property type="match status" value="1"/>
</dbReference>
<dbReference type="HAMAP" id="MF_01346">
    <property type="entry name" value="ATP_synth_alpha_bact"/>
    <property type="match status" value="1"/>
</dbReference>
<dbReference type="InterPro" id="IPR023366">
    <property type="entry name" value="ATP_synth_asu-like_sf"/>
</dbReference>
<dbReference type="InterPro" id="IPR000793">
    <property type="entry name" value="ATP_synth_asu_C"/>
</dbReference>
<dbReference type="InterPro" id="IPR038376">
    <property type="entry name" value="ATP_synth_asu_C_sf"/>
</dbReference>
<dbReference type="InterPro" id="IPR033732">
    <property type="entry name" value="ATP_synth_F1_a_nt-bd_dom"/>
</dbReference>
<dbReference type="InterPro" id="IPR005294">
    <property type="entry name" value="ATP_synth_F1_asu"/>
</dbReference>
<dbReference type="InterPro" id="IPR020003">
    <property type="entry name" value="ATPase_a/bsu_AS"/>
</dbReference>
<dbReference type="InterPro" id="IPR004100">
    <property type="entry name" value="ATPase_F1/V1/A1_a/bsu_N"/>
</dbReference>
<dbReference type="InterPro" id="IPR036121">
    <property type="entry name" value="ATPase_F1/V1/A1_a/bsu_N_sf"/>
</dbReference>
<dbReference type="InterPro" id="IPR000194">
    <property type="entry name" value="ATPase_F1/V1/A1_a/bsu_nucl-bd"/>
</dbReference>
<dbReference type="InterPro" id="IPR027417">
    <property type="entry name" value="P-loop_NTPase"/>
</dbReference>
<dbReference type="NCBIfam" id="TIGR00962">
    <property type="entry name" value="atpA"/>
    <property type="match status" value="1"/>
</dbReference>
<dbReference type="NCBIfam" id="NF009884">
    <property type="entry name" value="PRK13343.1"/>
    <property type="match status" value="1"/>
</dbReference>
<dbReference type="PANTHER" id="PTHR48082">
    <property type="entry name" value="ATP SYNTHASE SUBUNIT ALPHA, MITOCHONDRIAL"/>
    <property type="match status" value="1"/>
</dbReference>
<dbReference type="PANTHER" id="PTHR48082:SF2">
    <property type="entry name" value="ATP SYNTHASE SUBUNIT ALPHA, MITOCHONDRIAL"/>
    <property type="match status" value="1"/>
</dbReference>
<dbReference type="Pfam" id="PF00006">
    <property type="entry name" value="ATP-synt_ab"/>
    <property type="match status" value="1"/>
</dbReference>
<dbReference type="Pfam" id="PF00306">
    <property type="entry name" value="ATP-synt_ab_C"/>
    <property type="match status" value="1"/>
</dbReference>
<dbReference type="Pfam" id="PF02874">
    <property type="entry name" value="ATP-synt_ab_N"/>
    <property type="match status" value="1"/>
</dbReference>
<dbReference type="PIRSF" id="PIRSF039088">
    <property type="entry name" value="F_ATPase_subunit_alpha"/>
    <property type="match status" value="1"/>
</dbReference>
<dbReference type="SUPFAM" id="SSF47917">
    <property type="entry name" value="C-terminal domain of alpha and beta subunits of F1 ATP synthase"/>
    <property type="match status" value="1"/>
</dbReference>
<dbReference type="SUPFAM" id="SSF50615">
    <property type="entry name" value="N-terminal domain of alpha and beta subunits of F1 ATP synthase"/>
    <property type="match status" value="1"/>
</dbReference>
<dbReference type="SUPFAM" id="SSF52540">
    <property type="entry name" value="P-loop containing nucleoside triphosphate hydrolases"/>
    <property type="match status" value="1"/>
</dbReference>
<dbReference type="PROSITE" id="PS00152">
    <property type="entry name" value="ATPASE_ALPHA_BETA"/>
    <property type="match status" value="1"/>
</dbReference>
<evidence type="ECO:0000255" key="1">
    <source>
        <dbReference type="HAMAP-Rule" id="MF_01346"/>
    </source>
</evidence>
<comment type="function">
    <text evidence="1">Produces ATP from ADP in the presence of a proton gradient across the membrane. The alpha chain is a regulatory subunit.</text>
</comment>
<comment type="catalytic activity">
    <reaction evidence="1">
        <text>ATP + H2O + 4 H(+)(in) = ADP + phosphate + 5 H(+)(out)</text>
        <dbReference type="Rhea" id="RHEA:57720"/>
        <dbReference type="ChEBI" id="CHEBI:15377"/>
        <dbReference type="ChEBI" id="CHEBI:15378"/>
        <dbReference type="ChEBI" id="CHEBI:30616"/>
        <dbReference type="ChEBI" id="CHEBI:43474"/>
        <dbReference type="ChEBI" id="CHEBI:456216"/>
        <dbReference type="EC" id="7.1.2.2"/>
    </reaction>
</comment>
<comment type="subunit">
    <text evidence="1">F-type ATPases have 2 components, CF(1) - the catalytic core - and CF(0) - the membrane proton channel. CF(1) has five subunits: alpha(3), beta(3), gamma(1), delta(1), epsilon(1). CF(0) has three main subunits: a(1), b(2) and c(9-12). The alpha and beta chains form an alternating ring which encloses part of the gamma chain. CF(1) is attached to CF(0) by a central stalk formed by the gamma and epsilon chains, while a peripheral stalk is formed by the delta and b chains.</text>
</comment>
<comment type="subcellular location">
    <subcellularLocation>
        <location evidence="1">Cell inner membrane</location>
        <topology evidence="1">Peripheral membrane protein</topology>
    </subcellularLocation>
</comment>
<comment type="similarity">
    <text evidence="1">Belongs to the ATPase alpha/beta chains family.</text>
</comment>
<organism>
    <name type="scientific">Helicobacter pylori (strain G27)</name>
    <dbReference type="NCBI Taxonomy" id="563041"/>
    <lineage>
        <taxon>Bacteria</taxon>
        <taxon>Pseudomonadati</taxon>
        <taxon>Campylobacterota</taxon>
        <taxon>Epsilonproteobacteria</taxon>
        <taxon>Campylobacterales</taxon>
        <taxon>Helicobacteraceae</taxon>
        <taxon>Helicobacter</taxon>
    </lineage>
</organism>
<keyword id="KW-0066">ATP synthesis</keyword>
<keyword id="KW-0067">ATP-binding</keyword>
<keyword id="KW-0997">Cell inner membrane</keyword>
<keyword id="KW-1003">Cell membrane</keyword>
<keyword id="KW-0139">CF(1)</keyword>
<keyword id="KW-0375">Hydrogen ion transport</keyword>
<keyword id="KW-0406">Ion transport</keyword>
<keyword id="KW-0472">Membrane</keyword>
<keyword id="KW-0547">Nucleotide-binding</keyword>
<keyword id="KW-1185">Reference proteome</keyword>
<keyword id="KW-1278">Translocase</keyword>
<keyword id="KW-0813">Transport</keyword>
<proteinExistence type="inferred from homology"/>
<name>ATPA_HELPG</name>